<accession>B0CAT4</accession>
<proteinExistence type="inferred from homology"/>
<keyword id="KW-0066">ATP synthesis</keyword>
<keyword id="KW-0139">CF(1)</keyword>
<keyword id="KW-0375">Hydrogen ion transport</keyword>
<keyword id="KW-0406">Ion transport</keyword>
<keyword id="KW-0472">Membrane</keyword>
<keyword id="KW-1185">Reference proteome</keyword>
<keyword id="KW-0793">Thylakoid</keyword>
<keyword id="KW-0813">Transport</keyword>
<evidence type="ECO:0000255" key="1">
    <source>
        <dbReference type="HAMAP-Rule" id="MF_00530"/>
    </source>
</evidence>
<evidence type="ECO:0000256" key="2">
    <source>
        <dbReference type="SAM" id="MobiDB-lite"/>
    </source>
</evidence>
<reference key="1">
    <citation type="journal article" date="2008" name="Proc. Natl. Acad. Sci. U.S.A.">
        <title>Niche adaptation and genome expansion in the chlorophyll d-producing cyanobacterium Acaryochloris marina.</title>
        <authorList>
            <person name="Swingley W.D."/>
            <person name="Chen M."/>
            <person name="Cheung P.C."/>
            <person name="Conrad A.L."/>
            <person name="Dejesa L.C."/>
            <person name="Hao J."/>
            <person name="Honchak B.M."/>
            <person name="Karbach L.E."/>
            <person name="Kurdoglu A."/>
            <person name="Lahiri S."/>
            <person name="Mastrian S.D."/>
            <person name="Miyashita H."/>
            <person name="Page L."/>
            <person name="Ramakrishna P."/>
            <person name="Satoh S."/>
            <person name="Sattley W.M."/>
            <person name="Shimada Y."/>
            <person name="Taylor H.L."/>
            <person name="Tomo T."/>
            <person name="Tsuchiya T."/>
            <person name="Wang Z.T."/>
            <person name="Raymond J."/>
            <person name="Mimuro M."/>
            <person name="Blankenship R.E."/>
            <person name="Touchman J.W."/>
        </authorList>
    </citation>
    <scope>NUCLEOTIDE SEQUENCE [LARGE SCALE GENOMIC DNA]</scope>
    <source>
        <strain>MBIC 11017</strain>
    </source>
</reference>
<organism>
    <name type="scientific">Acaryochloris marina (strain MBIC 11017)</name>
    <dbReference type="NCBI Taxonomy" id="329726"/>
    <lineage>
        <taxon>Bacteria</taxon>
        <taxon>Bacillati</taxon>
        <taxon>Cyanobacteriota</taxon>
        <taxon>Cyanophyceae</taxon>
        <taxon>Acaryochloridales</taxon>
        <taxon>Acaryochloridaceae</taxon>
        <taxon>Acaryochloris</taxon>
    </lineage>
</organism>
<name>ATPE_ACAM1</name>
<dbReference type="EMBL" id="CP000828">
    <property type="protein sequence ID" value="ABW30285.1"/>
    <property type="molecule type" value="Genomic_DNA"/>
</dbReference>
<dbReference type="RefSeq" id="WP_012165534.1">
    <property type="nucleotide sequence ID" value="NC_009925.1"/>
</dbReference>
<dbReference type="SMR" id="B0CAT4"/>
<dbReference type="STRING" id="329726.AM1_5327"/>
<dbReference type="KEGG" id="amr:AM1_5327"/>
<dbReference type="eggNOG" id="COG0355">
    <property type="taxonomic scope" value="Bacteria"/>
</dbReference>
<dbReference type="HOGENOM" id="CLU_084338_1_2_3"/>
<dbReference type="OrthoDB" id="9804110at2"/>
<dbReference type="Proteomes" id="UP000000268">
    <property type="component" value="Chromosome"/>
</dbReference>
<dbReference type="GO" id="GO:0031676">
    <property type="term" value="C:plasma membrane-derived thylakoid membrane"/>
    <property type="evidence" value="ECO:0007669"/>
    <property type="project" value="UniProtKB-SubCell"/>
</dbReference>
<dbReference type="GO" id="GO:0045259">
    <property type="term" value="C:proton-transporting ATP synthase complex"/>
    <property type="evidence" value="ECO:0007669"/>
    <property type="project" value="UniProtKB-KW"/>
</dbReference>
<dbReference type="GO" id="GO:0005524">
    <property type="term" value="F:ATP binding"/>
    <property type="evidence" value="ECO:0007669"/>
    <property type="project" value="UniProtKB-UniRule"/>
</dbReference>
<dbReference type="GO" id="GO:0046933">
    <property type="term" value="F:proton-transporting ATP synthase activity, rotational mechanism"/>
    <property type="evidence" value="ECO:0007669"/>
    <property type="project" value="UniProtKB-UniRule"/>
</dbReference>
<dbReference type="CDD" id="cd12152">
    <property type="entry name" value="F1-ATPase_delta"/>
    <property type="match status" value="1"/>
</dbReference>
<dbReference type="Gene3D" id="2.60.15.10">
    <property type="entry name" value="F0F1 ATP synthase delta/epsilon subunit, N-terminal"/>
    <property type="match status" value="1"/>
</dbReference>
<dbReference type="Gene3D" id="1.10.287.540">
    <property type="entry name" value="Helix hairpin bin"/>
    <property type="match status" value="1"/>
</dbReference>
<dbReference type="HAMAP" id="MF_00530">
    <property type="entry name" value="ATP_synth_epsil_bac"/>
    <property type="match status" value="1"/>
</dbReference>
<dbReference type="InterPro" id="IPR001469">
    <property type="entry name" value="ATP_synth_F1_dsu/esu"/>
</dbReference>
<dbReference type="InterPro" id="IPR020546">
    <property type="entry name" value="ATP_synth_F1_dsu/esu_N"/>
</dbReference>
<dbReference type="InterPro" id="IPR020547">
    <property type="entry name" value="ATP_synth_F1_esu_C"/>
</dbReference>
<dbReference type="InterPro" id="IPR036771">
    <property type="entry name" value="ATPsynth_dsu/esu_N"/>
</dbReference>
<dbReference type="NCBIfam" id="TIGR01216">
    <property type="entry name" value="ATP_synt_epsi"/>
    <property type="match status" value="1"/>
</dbReference>
<dbReference type="NCBIfam" id="NF009977">
    <property type="entry name" value="PRK13442.1"/>
    <property type="match status" value="1"/>
</dbReference>
<dbReference type="PANTHER" id="PTHR13822">
    <property type="entry name" value="ATP SYNTHASE DELTA/EPSILON CHAIN"/>
    <property type="match status" value="1"/>
</dbReference>
<dbReference type="PANTHER" id="PTHR13822:SF10">
    <property type="entry name" value="ATP SYNTHASE EPSILON CHAIN, CHLOROPLASTIC"/>
    <property type="match status" value="1"/>
</dbReference>
<dbReference type="Pfam" id="PF00401">
    <property type="entry name" value="ATP-synt_DE"/>
    <property type="match status" value="1"/>
</dbReference>
<dbReference type="Pfam" id="PF02823">
    <property type="entry name" value="ATP-synt_DE_N"/>
    <property type="match status" value="1"/>
</dbReference>
<dbReference type="SUPFAM" id="SSF51344">
    <property type="entry name" value="Epsilon subunit of F1F0-ATP synthase N-terminal domain"/>
    <property type="match status" value="1"/>
</dbReference>
<protein>
    <recommendedName>
        <fullName evidence="1">ATP synthase epsilon chain</fullName>
    </recommendedName>
    <alternativeName>
        <fullName evidence="1">ATP synthase F1 sector epsilon subunit</fullName>
    </alternativeName>
    <alternativeName>
        <fullName evidence="1">F-ATPase epsilon subunit</fullName>
    </alternativeName>
</protein>
<comment type="function">
    <text evidence="1">Produces ATP from ADP in the presence of a proton gradient across the membrane.</text>
</comment>
<comment type="subunit">
    <text evidence="1">F-type ATPases have 2 components, CF(1) - the catalytic core - and CF(0) - the membrane proton channel. CF(1) has five subunits: alpha(3), beta(3), gamma(1), delta(1), epsilon(1). CF(0) has three main subunits: a, b and c.</text>
</comment>
<comment type="subcellular location">
    <subcellularLocation>
        <location evidence="1">Cellular thylakoid membrane</location>
        <topology evidence="1">Peripheral membrane protein</topology>
    </subcellularLocation>
</comment>
<comment type="similarity">
    <text evidence="1">Belongs to the ATPase epsilon chain family.</text>
</comment>
<gene>
    <name evidence="1" type="primary">atpC</name>
    <name type="ordered locus">AM1_5327</name>
</gene>
<feature type="chain" id="PRO_1000081722" description="ATP synthase epsilon chain">
    <location>
        <begin position="1"/>
        <end position="138"/>
    </location>
</feature>
<feature type="region of interest" description="Disordered" evidence="2">
    <location>
        <begin position="88"/>
        <end position="119"/>
    </location>
</feature>
<feature type="compositionally biased region" description="Basic and acidic residues" evidence="2">
    <location>
        <begin position="109"/>
        <end position="119"/>
    </location>
</feature>
<sequence>MSLTVRVIAADKTVWDSAAEEVILPSTTGQLGILSGHAPLLSALDVGVMRVRPGKDWVSIALMGGFVEVENDEVVILVNGAERGDTIDREEARSTLSAAQARLDQSEQSEDKQERYEAQRDFKRARARLQASGEVVNI</sequence>